<reference key="1">
    <citation type="journal article" date="2004" name="Gene">
        <title>AtCPSF73-II gene encoding an Arabidopsis homolog of CPSF 73 kDa subunit is critical for early embryo development.</title>
        <authorList>
            <person name="Xu R."/>
            <person name="Ye X."/>
            <person name="Quinn Li Q."/>
        </authorList>
    </citation>
    <scope>NUCLEOTIDE SEQUENCE [MRNA]</scope>
    <scope>TISSUE SPECIFICITY</scope>
    <scope>DISRUPTION PHENOTYPE</scope>
</reference>
<reference key="2">
    <citation type="journal article" date="2006" name="Plant Mol. Biol.">
        <title>The 73 kD subunit of the cleavage and polyadenylation specificity factor (CPSF) complex affects reproductive development in Arabidopsis.</title>
        <authorList>
            <person name="Xu R."/>
            <person name="Zhao H."/>
            <person name="Dinkins R.D."/>
            <person name="Cheng X."/>
            <person name="Carberry G."/>
            <person name="Li Q.Q."/>
        </authorList>
    </citation>
    <scope>NUCLEOTIDE SEQUENCE [MRNA]</scope>
    <scope>INTERACTION WITH CPSF100</scope>
    <scope>TISSUE SPECIFICITY</scope>
    <scope>SUBCELLULAR LOCATION</scope>
</reference>
<reference key="3">
    <citation type="journal article" date="1999" name="Nature">
        <title>Sequence and analysis of chromosome 2 of the plant Arabidopsis thaliana.</title>
        <authorList>
            <person name="Lin X."/>
            <person name="Kaul S."/>
            <person name="Rounsley S.D."/>
            <person name="Shea T.P."/>
            <person name="Benito M.-I."/>
            <person name="Town C.D."/>
            <person name="Fujii C.Y."/>
            <person name="Mason T.M."/>
            <person name="Bowman C.L."/>
            <person name="Barnstead M.E."/>
            <person name="Feldblyum T.V."/>
            <person name="Buell C.R."/>
            <person name="Ketchum K.A."/>
            <person name="Lee J.J."/>
            <person name="Ronning C.M."/>
            <person name="Koo H.L."/>
            <person name="Moffat K.S."/>
            <person name="Cronin L.A."/>
            <person name="Shen M."/>
            <person name="Pai G."/>
            <person name="Van Aken S."/>
            <person name="Umayam L."/>
            <person name="Tallon L.J."/>
            <person name="Gill J.E."/>
            <person name="Adams M.D."/>
            <person name="Carrera A.J."/>
            <person name="Creasy T.H."/>
            <person name="Goodman H.M."/>
            <person name="Somerville C.R."/>
            <person name="Copenhaver G.P."/>
            <person name="Preuss D."/>
            <person name="Nierman W.C."/>
            <person name="White O."/>
            <person name="Eisen J.A."/>
            <person name="Salzberg S.L."/>
            <person name="Fraser C.M."/>
            <person name="Venter J.C."/>
        </authorList>
    </citation>
    <scope>NUCLEOTIDE SEQUENCE [LARGE SCALE GENOMIC DNA]</scope>
    <source>
        <strain>cv. Columbia</strain>
    </source>
</reference>
<reference key="4">
    <citation type="journal article" date="2017" name="Plant J.">
        <title>Araport11: a complete reannotation of the Arabidopsis thaliana reference genome.</title>
        <authorList>
            <person name="Cheng C.Y."/>
            <person name="Krishnakumar V."/>
            <person name="Chan A.P."/>
            <person name="Thibaud-Nissen F."/>
            <person name="Schobel S."/>
            <person name="Town C.D."/>
        </authorList>
    </citation>
    <scope>GENOME REANNOTATION</scope>
    <source>
        <strain>cv. Columbia</strain>
    </source>
</reference>
<reference key="5">
    <citation type="submission" date="2005-04" db="EMBL/GenBank/DDBJ databases">
        <title>Large-scale analysis of RIKEN Arabidopsis full-length (RAFL) cDNAs.</title>
        <authorList>
            <person name="Totoki Y."/>
            <person name="Seki M."/>
            <person name="Ishida J."/>
            <person name="Nakajima M."/>
            <person name="Enju A."/>
            <person name="Kamiya A."/>
            <person name="Narusaka M."/>
            <person name="Shin-i T."/>
            <person name="Nakagawa M."/>
            <person name="Sakamoto N."/>
            <person name="Oishi K."/>
            <person name="Kohara Y."/>
            <person name="Kobayashi M."/>
            <person name="Toyoda A."/>
            <person name="Sakaki Y."/>
            <person name="Sakurai T."/>
            <person name="Iida K."/>
            <person name="Akiyama K."/>
            <person name="Satou M."/>
            <person name="Toyoda T."/>
            <person name="Konagaya A."/>
            <person name="Carninci P."/>
            <person name="Kawai J."/>
            <person name="Hayashizaki Y."/>
            <person name="Shinozaki K."/>
        </authorList>
    </citation>
    <scope>NUCLEOTIDE SEQUENCE [LARGE SCALE MRNA]</scope>
    <source>
        <strain>cv. Columbia</strain>
    </source>
</reference>
<reference key="6">
    <citation type="journal article" date="2009" name="BMC Cell Biol.">
        <title>Distinctive interactions of the Arabidopsis homolog of the 30 kD subunit of the cleavage and polyadenylation specificity factor (AtCPSF30) with other polyadenylation factor subunits.</title>
        <authorList>
            <person name="Rao S."/>
            <person name="Dinkins R.D."/>
            <person name="Hunt A.G."/>
        </authorList>
    </citation>
    <scope>SUBCELLULAR LOCATION</scope>
    <scope>INTERACTION WITH CPSF30</scope>
</reference>
<reference key="7">
    <citation type="journal article" date="2009" name="Plant Physiol.">
        <title>Unique features of plant cleavage and polyadenylation specificity factor revealed by proteomic studies.</title>
        <authorList>
            <person name="Zhao H."/>
            <person name="Xing D."/>
            <person name="Li Q.Q."/>
        </authorList>
    </citation>
    <scope>COMPONENT OF CPSF COMPLEX</scope>
</reference>
<evidence type="ECO:0000250" key="1"/>
<evidence type="ECO:0000269" key="2">
    <source>
    </source>
</evidence>
<evidence type="ECO:0000269" key="3">
    <source>
    </source>
</evidence>
<evidence type="ECO:0000269" key="4">
    <source>
    </source>
</evidence>
<evidence type="ECO:0000305" key="5"/>
<evidence type="ECO:0000305" key="6">
    <source>
    </source>
</evidence>
<name>CPS3B_ARATH</name>
<sequence>MAIDCLVLGAGQEIGKSCVVVTINGKKIMFDCGMHMGCDDHNRYPNFSLISKSGDFDNAISCIIITHFHMDHVGALPYFTEVCGYNGPIYMSYPTKALSPLMLEDYRRVMVDRRGEEELFTTTHIANCMKKVIAIDLKQTIQVDEDLQIRAYYAGHVLGAVMVYAKMGDAAIVYTGDYNMTTDRHLGAAKIDRLQLDLLISESTYATTIRGSKYPREREFLQAVHKCVAGGGKALIPSFALGRAQELCMLLDDYWERMNIKVPIYFSSGLTIQANMYYKMLISWTSQNVKEKHNTHNPFDFKNVKDFDRSLIHAPGPCVLFATPGMLCAGFSLEVFKHWAPSPLNLVALPGYSVAGTVGHKLMAGKPTTVDLYNGTKVDVRCKVHQVAFSPHTDAKGIMDLTKFLSPKNVVLVHGEKPSMMILKEKITSELDIPCFVPANGETVSFASTTYIKANASDMFLKSCSNPNFKFSNSTQLRVTDHRTADGVLVIEKSKKAKIVHQDEISEVLHEKNHVVSLAHCCPVKVKGESEDDDVDLIKQLSAKILKTVSGAQIHESENCLQVASFKGSLCLKDKCMHRSSSSSSEAVFLCCNWSIADLELGWEIINAIKLNH</sequence>
<protein>
    <recommendedName>
        <fullName>Cleavage and polyadenylation specificity factor subunit 3-II</fullName>
        <ecNumber>3.1.27.-</ecNumber>
    </recommendedName>
    <alternativeName>
        <fullName>Cleavage and polyadenylation specificity factor 73 kDa subunit II</fullName>
        <shortName>AtCPSF73-II</shortName>
        <shortName>CPSF 73 kDa subunit II</shortName>
    </alternativeName>
    <alternativeName>
        <fullName>Protein EMBRYO SAC DEVELOPMENT ARREST 26</fullName>
    </alternativeName>
</protein>
<proteinExistence type="evidence at protein level"/>
<dbReference type="EC" id="3.1.27.-"/>
<dbReference type="EMBL" id="AY168923">
    <property type="protein sequence ID" value="AAN87883.1"/>
    <property type="molecule type" value="mRNA"/>
</dbReference>
<dbReference type="EMBL" id="AC006069">
    <property type="protein sequence ID" value="AAD12712.1"/>
    <property type="status" value="ALT_SEQ"/>
    <property type="molecule type" value="Genomic_DNA"/>
</dbReference>
<dbReference type="EMBL" id="CP002685">
    <property type="protein sequence ID" value="AEC05489.1"/>
    <property type="molecule type" value="Genomic_DNA"/>
</dbReference>
<dbReference type="EMBL" id="AK221561">
    <property type="protein sequence ID" value="BAD94982.1"/>
    <property type="molecule type" value="mRNA"/>
</dbReference>
<dbReference type="PIR" id="D84428">
    <property type="entry name" value="D84428"/>
</dbReference>
<dbReference type="RefSeq" id="NP_178282.2">
    <property type="nucleotide sequence ID" value="NM_126234.3"/>
</dbReference>
<dbReference type="SMR" id="Q8GUU3"/>
<dbReference type="BioGRID" id="105">
    <property type="interactions" value="5"/>
</dbReference>
<dbReference type="FunCoup" id="Q8GUU3">
    <property type="interactions" value="3228"/>
</dbReference>
<dbReference type="IntAct" id="Q8GUU3">
    <property type="interactions" value="4"/>
</dbReference>
<dbReference type="STRING" id="3702.Q8GUU3"/>
<dbReference type="iPTMnet" id="Q8GUU3"/>
<dbReference type="PaxDb" id="3702-AT2G01730.1"/>
<dbReference type="ProteomicsDB" id="224518"/>
<dbReference type="EnsemblPlants" id="AT2G01730.1">
    <property type="protein sequence ID" value="AT2G01730.1"/>
    <property type="gene ID" value="AT2G01730"/>
</dbReference>
<dbReference type="GeneID" id="814702"/>
<dbReference type="Gramene" id="AT2G01730.1">
    <property type="protein sequence ID" value="AT2G01730.1"/>
    <property type="gene ID" value="AT2G01730"/>
</dbReference>
<dbReference type="KEGG" id="ath:AT2G01730"/>
<dbReference type="Araport" id="AT2G01730"/>
<dbReference type="TAIR" id="AT2G01730">
    <property type="gene designation" value="CPSF73-II"/>
</dbReference>
<dbReference type="eggNOG" id="KOG1136">
    <property type="taxonomic scope" value="Eukaryota"/>
</dbReference>
<dbReference type="HOGENOM" id="CLU_009673_3_1_1"/>
<dbReference type="InParanoid" id="Q8GUU3"/>
<dbReference type="OMA" id="YLDGMIW"/>
<dbReference type="PRO" id="PR:Q8GUU3"/>
<dbReference type="Proteomes" id="UP000006548">
    <property type="component" value="Chromosome 2"/>
</dbReference>
<dbReference type="ExpressionAtlas" id="Q8GUU3">
    <property type="expression patterns" value="baseline and differential"/>
</dbReference>
<dbReference type="GO" id="GO:0005634">
    <property type="term" value="C:nucleus"/>
    <property type="evidence" value="ECO:0000314"/>
    <property type="project" value="UniProtKB"/>
</dbReference>
<dbReference type="GO" id="GO:0004518">
    <property type="term" value="F:nuclease activity"/>
    <property type="evidence" value="ECO:0007669"/>
    <property type="project" value="UniProtKB-KW"/>
</dbReference>
<dbReference type="GO" id="GO:0006397">
    <property type="term" value="P:mRNA processing"/>
    <property type="evidence" value="ECO:0007669"/>
    <property type="project" value="UniProtKB-KW"/>
</dbReference>
<dbReference type="GO" id="GO:0010197">
    <property type="term" value="P:polar nucleus fusion"/>
    <property type="evidence" value="ECO:0000315"/>
    <property type="project" value="TAIR"/>
</dbReference>
<dbReference type="CDD" id="cd16291">
    <property type="entry name" value="INTS11-like_MBL-fold"/>
    <property type="match status" value="1"/>
</dbReference>
<dbReference type="FunFam" id="3.40.50.10890:FF:000005">
    <property type="entry name" value="Cleavage and polyadenylation specificity factor subunit 3-II"/>
    <property type="match status" value="1"/>
</dbReference>
<dbReference type="FunFam" id="3.60.15.10:FF:000028">
    <property type="entry name" value="Integrator complex subunit 11 isoform X3"/>
    <property type="match status" value="1"/>
</dbReference>
<dbReference type="Gene3D" id="3.40.50.10890">
    <property type="match status" value="1"/>
</dbReference>
<dbReference type="Gene3D" id="3.60.15.10">
    <property type="entry name" value="Ribonuclease Z/Hydroxyacylglutathione hydrolase-like"/>
    <property type="match status" value="1"/>
</dbReference>
<dbReference type="InterPro" id="IPR022712">
    <property type="entry name" value="Beta_Casp"/>
</dbReference>
<dbReference type="InterPro" id="IPR041897">
    <property type="entry name" value="INTS11-like_MBL-fold"/>
</dbReference>
<dbReference type="InterPro" id="IPR050698">
    <property type="entry name" value="MBL"/>
</dbReference>
<dbReference type="InterPro" id="IPR001279">
    <property type="entry name" value="Metallo-B-lactamas"/>
</dbReference>
<dbReference type="InterPro" id="IPR036866">
    <property type="entry name" value="RibonucZ/Hydroxyglut_hydro"/>
</dbReference>
<dbReference type="InterPro" id="IPR011108">
    <property type="entry name" value="RMMBL"/>
</dbReference>
<dbReference type="PANTHER" id="PTHR11203">
    <property type="entry name" value="CLEAVAGE AND POLYADENYLATION SPECIFICITY FACTOR FAMILY MEMBER"/>
    <property type="match status" value="1"/>
</dbReference>
<dbReference type="PANTHER" id="PTHR11203:SF37">
    <property type="entry name" value="INTEGRATOR COMPLEX SUBUNIT 11"/>
    <property type="match status" value="1"/>
</dbReference>
<dbReference type="Pfam" id="PF10996">
    <property type="entry name" value="Beta-Casp"/>
    <property type="match status" value="1"/>
</dbReference>
<dbReference type="Pfam" id="PF16661">
    <property type="entry name" value="Lactamase_B_6"/>
    <property type="match status" value="1"/>
</dbReference>
<dbReference type="Pfam" id="PF07521">
    <property type="entry name" value="RMMBL"/>
    <property type="match status" value="1"/>
</dbReference>
<dbReference type="SMART" id="SM01027">
    <property type="entry name" value="Beta-Casp"/>
    <property type="match status" value="1"/>
</dbReference>
<dbReference type="SMART" id="SM00849">
    <property type="entry name" value="Lactamase_B"/>
    <property type="match status" value="1"/>
</dbReference>
<dbReference type="SUPFAM" id="SSF56281">
    <property type="entry name" value="Metallo-hydrolase/oxidoreductase"/>
    <property type="match status" value="1"/>
</dbReference>
<organism>
    <name type="scientific">Arabidopsis thaliana</name>
    <name type="common">Mouse-ear cress</name>
    <dbReference type="NCBI Taxonomy" id="3702"/>
    <lineage>
        <taxon>Eukaryota</taxon>
        <taxon>Viridiplantae</taxon>
        <taxon>Streptophyta</taxon>
        <taxon>Embryophyta</taxon>
        <taxon>Tracheophyta</taxon>
        <taxon>Spermatophyta</taxon>
        <taxon>Magnoliopsida</taxon>
        <taxon>eudicotyledons</taxon>
        <taxon>Gunneridae</taxon>
        <taxon>Pentapetalae</taxon>
        <taxon>rosids</taxon>
        <taxon>malvids</taxon>
        <taxon>Brassicales</taxon>
        <taxon>Brassicaceae</taxon>
        <taxon>Camelineae</taxon>
        <taxon>Arabidopsis</taxon>
    </lineage>
</organism>
<accession>Q8GUU3</accession>
<accession>Q56XW2</accession>
<accession>Q9ZUA1</accession>
<comment type="function">
    <text evidence="6">Component of the cleavage and polyadenylation specificity factor (CPSF) complex that play a key role in pre-mRNA 3'-end formation, recognizing the AAUAAA signal sequence and interacting with poly(A) polymerase and other factors to bring about cleavage and poly(A) addition. May function as mRNA 3'-end-processing endonuclease and also be involved in the histone 3'-end pre-mRNA processing.</text>
</comment>
<comment type="subunit">
    <text evidence="3 4">Component of the CPSF complex, at least composed of CPSF160, CPSF100, CPSF73-I, CPSF73-II, CPSF30, FY and FIPS5. Interacts with CPSF30, CPSF100, CPSF160 and FY.</text>
</comment>
<comment type="interaction">
    <interactant intactId="EBI-1775477">
        <id>Q8GUU3</id>
    </interactant>
    <interactant intactId="EBI-1775444">
        <id>Q9LKF9</id>
        <label>CPSF100</label>
    </interactant>
    <organismsDiffer>false</organismsDiffer>
    <experiments>3</experiments>
</comment>
<comment type="subcellular location">
    <subcellularLocation>
        <location evidence="3 4">Nucleus</location>
    </subcellularLocation>
</comment>
<comment type="tissue specificity">
    <text evidence="2 3">Highly expressed in senescence leaves, petals, stamens, pollen and late stages of siliques with seeds. Also detected in roots, stems, leaves and seedlings.</text>
</comment>
<comment type="domain">
    <text evidence="1">The HXHXDH motif is essential for the endoribonuclease activity of the CPSF complex.</text>
</comment>
<comment type="disruption phenotype">
    <text evidence="2">Embryo lethal.</text>
</comment>
<comment type="miscellaneous">
    <text>CPSF73-I and CPSF73-II are not functionally redundant, but both are essential in plant development.</text>
</comment>
<comment type="similarity">
    <text evidence="5">Belongs to the metallo-beta-lactamase superfamily. RNA-metabolizing metallo-beta-lactamase-like family. INTS11 subfamily.</text>
</comment>
<comment type="sequence caution" evidence="5">
    <conflict type="erroneous gene model prediction">
        <sequence resource="EMBL-CDS" id="AAD12712"/>
    </conflict>
</comment>
<gene>
    <name type="primary">CPSF73-II</name>
    <name type="synonym">EDA26</name>
    <name type="synonym">FEG</name>
    <name type="ordered locus">At2g01730</name>
    <name type="ORF">T8O11.10</name>
</gene>
<keyword id="KW-0378">Hydrolase</keyword>
<keyword id="KW-0507">mRNA processing</keyword>
<keyword id="KW-0540">Nuclease</keyword>
<keyword id="KW-0539">Nucleus</keyword>
<keyword id="KW-1185">Reference proteome</keyword>
<feature type="chain" id="PRO_0000391781" description="Cleavage and polyadenylation specificity factor subunit 3-II">
    <location>
        <begin position="1"/>
        <end position="613"/>
    </location>
</feature>
<feature type="short sequence motif" description="HXHXDH motif">
    <location>
        <begin position="67"/>
        <end position="72"/>
    </location>
</feature>
<feature type="sequence conflict" description="In Ref. 1; AAN87883." evidence="5" ref="1">
    <original>T</original>
    <variation>I</variation>
    <location>
        <position position="323"/>
    </location>
</feature>
<feature type="sequence conflict" description="In Ref. 1; AAN87883." evidence="5" ref="1">
    <original>F</original>
    <variation>L</variation>
    <location>
        <position position="331"/>
    </location>
</feature>
<feature type="sequence conflict" description="In Ref. 1; AAN87883." evidence="5" ref="1">
    <original>P</original>
    <variation>L</variation>
    <location>
        <position position="350"/>
    </location>
</feature>
<feature type="sequence conflict" description="In Ref. 1; AAN87883." evidence="5" ref="1">
    <original>Y</original>
    <variation>H</variation>
    <location>
        <position position="373"/>
    </location>
</feature>